<reference key="1">
    <citation type="journal article" date="2009" name="Environ. Microbiol.">
        <title>The genome of Polaromonas naphthalenivorans strain CJ2, isolated from coal tar-contaminated sediment, reveals physiological and metabolic versatility and evolution through extensive horizontal gene transfer.</title>
        <authorList>
            <person name="Yagi J.M."/>
            <person name="Sims D."/>
            <person name="Brettin T."/>
            <person name="Bruce D."/>
            <person name="Madsen E.L."/>
        </authorList>
    </citation>
    <scope>NUCLEOTIDE SEQUENCE [LARGE SCALE GENOMIC DNA]</scope>
    <source>
        <strain>CJ2</strain>
    </source>
</reference>
<comment type="function">
    <text evidence="1">One of the early assembly proteins it binds 23S rRNA. One of the proteins that surrounds the polypeptide exit tunnel on the outside of the ribosome. Forms the main docking site for trigger factor binding to the ribosome.</text>
</comment>
<comment type="subunit">
    <text evidence="1">Part of the 50S ribosomal subunit. Contacts protein L29, and trigger factor when it is bound to the ribosome.</text>
</comment>
<comment type="similarity">
    <text evidence="1">Belongs to the universal ribosomal protein uL23 family.</text>
</comment>
<gene>
    <name evidence="1" type="primary">rplW</name>
    <name type="ordered locus">Pnap_0205</name>
</gene>
<name>RL23_POLNA</name>
<evidence type="ECO:0000255" key="1">
    <source>
        <dbReference type="HAMAP-Rule" id="MF_01369"/>
    </source>
</evidence>
<evidence type="ECO:0000305" key="2"/>
<accession>A1VIQ2</accession>
<feature type="chain" id="PRO_1000068131" description="Large ribosomal subunit protein uL23">
    <location>
        <begin position="1"/>
        <end position="108"/>
    </location>
</feature>
<proteinExistence type="inferred from homology"/>
<organism>
    <name type="scientific">Polaromonas naphthalenivorans (strain CJ2)</name>
    <dbReference type="NCBI Taxonomy" id="365044"/>
    <lineage>
        <taxon>Bacteria</taxon>
        <taxon>Pseudomonadati</taxon>
        <taxon>Pseudomonadota</taxon>
        <taxon>Betaproteobacteria</taxon>
        <taxon>Burkholderiales</taxon>
        <taxon>Comamonadaceae</taxon>
        <taxon>Polaromonas</taxon>
    </lineage>
</organism>
<sequence>MSAVNAQTKYDEGRLMQVLVAPIVSEKATMIAEKSNSVTFKVLQDATKYEIKAAVELMFKVNVKAVAVLNIKGKTKRFGKSVGRRDNLRKAYVTLQAGQELNLGGESA</sequence>
<keyword id="KW-1185">Reference proteome</keyword>
<keyword id="KW-0687">Ribonucleoprotein</keyword>
<keyword id="KW-0689">Ribosomal protein</keyword>
<keyword id="KW-0694">RNA-binding</keyword>
<keyword id="KW-0699">rRNA-binding</keyword>
<protein>
    <recommendedName>
        <fullName evidence="1">Large ribosomal subunit protein uL23</fullName>
    </recommendedName>
    <alternativeName>
        <fullName evidence="2">50S ribosomal protein L23</fullName>
    </alternativeName>
</protein>
<dbReference type="EMBL" id="CP000529">
    <property type="protein sequence ID" value="ABM35530.1"/>
    <property type="molecule type" value="Genomic_DNA"/>
</dbReference>
<dbReference type="RefSeq" id="WP_011799639.1">
    <property type="nucleotide sequence ID" value="NC_008781.1"/>
</dbReference>
<dbReference type="SMR" id="A1VIQ2"/>
<dbReference type="STRING" id="365044.Pnap_0205"/>
<dbReference type="KEGG" id="pna:Pnap_0205"/>
<dbReference type="eggNOG" id="COG0089">
    <property type="taxonomic scope" value="Bacteria"/>
</dbReference>
<dbReference type="HOGENOM" id="CLU_037562_3_1_4"/>
<dbReference type="OrthoDB" id="9793353at2"/>
<dbReference type="Proteomes" id="UP000000644">
    <property type="component" value="Chromosome"/>
</dbReference>
<dbReference type="GO" id="GO:1990904">
    <property type="term" value="C:ribonucleoprotein complex"/>
    <property type="evidence" value="ECO:0007669"/>
    <property type="project" value="UniProtKB-KW"/>
</dbReference>
<dbReference type="GO" id="GO:0005840">
    <property type="term" value="C:ribosome"/>
    <property type="evidence" value="ECO:0007669"/>
    <property type="project" value="UniProtKB-KW"/>
</dbReference>
<dbReference type="GO" id="GO:0019843">
    <property type="term" value="F:rRNA binding"/>
    <property type="evidence" value="ECO:0007669"/>
    <property type="project" value="UniProtKB-UniRule"/>
</dbReference>
<dbReference type="GO" id="GO:0003735">
    <property type="term" value="F:structural constituent of ribosome"/>
    <property type="evidence" value="ECO:0007669"/>
    <property type="project" value="InterPro"/>
</dbReference>
<dbReference type="GO" id="GO:0006412">
    <property type="term" value="P:translation"/>
    <property type="evidence" value="ECO:0007669"/>
    <property type="project" value="UniProtKB-UniRule"/>
</dbReference>
<dbReference type="FunFam" id="3.30.70.330:FF:000001">
    <property type="entry name" value="50S ribosomal protein L23"/>
    <property type="match status" value="1"/>
</dbReference>
<dbReference type="Gene3D" id="3.30.70.330">
    <property type="match status" value="1"/>
</dbReference>
<dbReference type="HAMAP" id="MF_01369_B">
    <property type="entry name" value="Ribosomal_uL23_B"/>
    <property type="match status" value="1"/>
</dbReference>
<dbReference type="InterPro" id="IPR012677">
    <property type="entry name" value="Nucleotide-bd_a/b_plait_sf"/>
</dbReference>
<dbReference type="InterPro" id="IPR013025">
    <property type="entry name" value="Ribosomal_uL23-like"/>
</dbReference>
<dbReference type="InterPro" id="IPR012678">
    <property type="entry name" value="Ribosomal_uL23/eL15/eS24_sf"/>
</dbReference>
<dbReference type="NCBIfam" id="NF004359">
    <property type="entry name" value="PRK05738.1-3"/>
    <property type="match status" value="1"/>
</dbReference>
<dbReference type="NCBIfam" id="NF004363">
    <property type="entry name" value="PRK05738.2-4"/>
    <property type="match status" value="1"/>
</dbReference>
<dbReference type="PANTHER" id="PTHR11620">
    <property type="entry name" value="60S RIBOSOMAL PROTEIN L23A"/>
    <property type="match status" value="1"/>
</dbReference>
<dbReference type="Pfam" id="PF00276">
    <property type="entry name" value="Ribosomal_L23"/>
    <property type="match status" value="1"/>
</dbReference>
<dbReference type="SUPFAM" id="SSF54189">
    <property type="entry name" value="Ribosomal proteins S24e, L23 and L15e"/>
    <property type="match status" value="1"/>
</dbReference>